<gene>
    <name evidence="1" type="primary">rpoC</name>
    <name type="ordered locus">SMGWSS_056</name>
</gene>
<keyword id="KW-0240">DNA-directed RNA polymerase</keyword>
<keyword id="KW-0460">Magnesium</keyword>
<keyword id="KW-0479">Metal-binding</keyword>
<keyword id="KW-0548">Nucleotidyltransferase</keyword>
<keyword id="KW-0804">Transcription</keyword>
<keyword id="KW-0808">Transferase</keyword>
<keyword id="KW-0862">Zinc</keyword>
<protein>
    <recommendedName>
        <fullName evidence="1">DNA-directed RNA polymerase subunit beta'</fullName>
        <shortName evidence="1">RNAP subunit beta'</shortName>
        <ecNumber evidence="1">2.7.7.6</ecNumber>
    </recommendedName>
    <alternativeName>
        <fullName evidence="1">RNA polymerase subunit beta'</fullName>
    </alternativeName>
    <alternativeName>
        <fullName evidence="1">Transcriptase subunit beta'</fullName>
    </alternativeName>
</protein>
<organism>
    <name type="scientific">Karelsulcia muelleri (strain GWSS)</name>
    <name type="common">Sulcia muelleri</name>
    <dbReference type="NCBI Taxonomy" id="444179"/>
    <lineage>
        <taxon>Bacteria</taxon>
        <taxon>Pseudomonadati</taxon>
        <taxon>Bacteroidota</taxon>
        <taxon>Flavobacteriia</taxon>
        <taxon>Flavobacteriales</taxon>
        <taxon>Candidatus Karelsulcia</taxon>
    </lineage>
</organism>
<name>RPOC_KARMG</name>
<proteinExistence type="inferred from homology"/>
<reference key="1">
    <citation type="journal article" date="2007" name="Proc. Natl. Acad. Sci. U.S.A.">
        <title>Parallel genomic evolution and metabolic interdependence in an ancient symbiosis.</title>
        <authorList>
            <person name="McCutcheon J.P."/>
            <person name="Moran N.A."/>
        </authorList>
    </citation>
    <scope>NUCLEOTIDE SEQUENCE [LARGE SCALE GENOMIC DNA]</scope>
    <source>
        <strain>GWSS</strain>
    </source>
</reference>
<evidence type="ECO:0000255" key="1">
    <source>
        <dbReference type="HAMAP-Rule" id="MF_01322"/>
    </source>
</evidence>
<evidence type="ECO:0000256" key="2">
    <source>
        <dbReference type="SAM" id="MobiDB-lite"/>
    </source>
</evidence>
<evidence type="ECO:0000305" key="3"/>
<sequence>MSKKQYKISHFMTTKISLRISSPEEILKDSYGEIIKPETINYRTNKPERNGLFCEKIFGPIKDYECFCGKYKKKLYKEIIRLRQLNKELKVKGLFCNRCGVEITKNTVRRTRMGHINLVVPIVHIWGFRSTPNKIGSILGLSSQQLDMIIYYERYVVIQPGIANSYNNLSIKKLDLLTEEEYTYILNKIPIGNKYLYDNDPNKFIAKMGAECLEELLIRVDLEVLLSDLKKEIKNEESKQRKIELFKRLNVVECFIEGKKKGNKIESIILKVLPVIPPELRPLVPLDGGGYASSDLNDFYRRILIRNNRLKRLIHISAPEIILRNEKRMLQEAVDSLLDNSKKILAVKSESNRPLKSLSDSLKGKQGRFRQNLLGKRVDYSARSVIVVGPKLKLHECGLPKEIAAEIYKPFLIRKLLERKIVRTVKSAKKLISKKDPIIWDILKYLLKGHPVLLNRAPTLHRLGIQSFQPKLIEGKAILLHPLVCSAFNADFDGDQMAVHLPLSNEAILEAKLLMLASQNILNPANGYPITVPSQDMVLGLYYMTKELKSTYESKIKGEGMCFSSLEEVEIAYNNKVVEIHAIIKVKVKILENIGLISKIIKTTVGRVLFNIVVPPKVGYINKLLTNKSLRKIINYILYNTNIPTTAKFLDKIKDLGYYHAFKGGLSFNLNDISIPKEKKSLVKRAIEKVSLVKDNYNLGLITNNERYNQIIDIWTNTNVSLTEKVINYMRKSKQGFNSVYMMLDSGARSSKEQIRQLSGMRGLMAKPQKTSSLGSEIIENPILSNFLEGLSILEYFISTHGARKGLADTALKTADAGYLTRRLVDSAQDVIIQEDDCKTLLGIKISAVKKKEKIIETLSSRVLGRIALNNIYDPTNNNVLIKSSQMIDEKNINLIEKASIDTIEVRSPLTCKSKTGICRKCYGRNLANGLMIQKGEAIGVIAAQSIGEPGTQLTLRTFHVGGTAGNIYEYSKIKAKYDGIIEYEDIQVVKNLVISRSSEIRLLNNHKDKVILMKKKIPYGAKLYVSNKQLVKKNDIICSWDPYNAVIIAEFTGKIRYSNIERDEQTGFKVISERKTPTLKIVNKKNEILKSYNIPVGAHLVVNDGDIINEGSILIKIPIKDLKSGDITGGLPRLSELFEARNDDDDDDYYDSDYYDYYDYSDDDDDYDDYDDYYYNYDDDENDNDNDYDYDYDYDYDYDSDSHNSYSHNSYSPSSNDNYDYDYDSDSDYDSDYDYGDISLNEILDIKGLRAAQKKLINEIQEVYRSQGVKINDKHFEVIVRQMTQKVEIIKSGDTSFLEGNIEYTDVFLEENKRILNMKFIEESGDSKKFFKGQLVNFHELKKENYLLKLSNKNKILFRDVITAISKPIIQGITKAALQTKSFLSAASFQETTKVLYEAAISNKTDYLNGLKENVILGNKIPAGTGLKKSSYEEIIIGDGNQKLKKKDSEINKKLKIENKILK</sequence>
<feature type="chain" id="PRO_0000353443" description="DNA-directed RNA polymerase subunit beta'">
    <location>
        <begin position="1"/>
        <end position="1464"/>
    </location>
</feature>
<feature type="region of interest" description="Disordered" evidence="2">
    <location>
        <begin position="1143"/>
        <end position="1229"/>
    </location>
</feature>
<feature type="compositionally biased region" description="Acidic residues" evidence="2">
    <location>
        <begin position="1143"/>
        <end position="1200"/>
    </location>
</feature>
<feature type="compositionally biased region" description="Low complexity" evidence="2">
    <location>
        <begin position="1204"/>
        <end position="1219"/>
    </location>
</feature>
<feature type="compositionally biased region" description="Acidic residues" evidence="2">
    <location>
        <begin position="1220"/>
        <end position="1229"/>
    </location>
</feature>
<feature type="binding site" evidence="1">
    <location>
        <position position="66"/>
    </location>
    <ligand>
        <name>Zn(2+)</name>
        <dbReference type="ChEBI" id="CHEBI:29105"/>
        <label>1</label>
    </ligand>
</feature>
<feature type="binding site" evidence="1">
    <location>
        <position position="68"/>
    </location>
    <ligand>
        <name>Zn(2+)</name>
        <dbReference type="ChEBI" id="CHEBI:29105"/>
        <label>1</label>
    </ligand>
</feature>
<feature type="binding site" evidence="1">
    <location>
        <position position="96"/>
    </location>
    <ligand>
        <name>Zn(2+)</name>
        <dbReference type="ChEBI" id="CHEBI:29105"/>
        <label>1</label>
    </ligand>
</feature>
<feature type="binding site" evidence="1">
    <location>
        <position position="99"/>
    </location>
    <ligand>
        <name>Zn(2+)</name>
        <dbReference type="ChEBI" id="CHEBI:29105"/>
        <label>1</label>
    </ligand>
</feature>
<feature type="binding site" evidence="1">
    <location>
        <position position="491"/>
    </location>
    <ligand>
        <name>Mg(2+)</name>
        <dbReference type="ChEBI" id="CHEBI:18420"/>
    </ligand>
</feature>
<feature type="binding site" evidence="1">
    <location>
        <position position="493"/>
    </location>
    <ligand>
        <name>Mg(2+)</name>
        <dbReference type="ChEBI" id="CHEBI:18420"/>
    </ligand>
</feature>
<feature type="binding site" evidence="1">
    <location>
        <position position="495"/>
    </location>
    <ligand>
        <name>Mg(2+)</name>
        <dbReference type="ChEBI" id="CHEBI:18420"/>
    </ligand>
</feature>
<feature type="binding site" evidence="1">
    <location>
        <position position="838"/>
    </location>
    <ligand>
        <name>Zn(2+)</name>
        <dbReference type="ChEBI" id="CHEBI:29105"/>
        <label>2</label>
    </ligand>
</feature>
<feature type="binding site" evidence="1">
    <location>
        <position position="912"/>
    </location>
    <ligand>
        <name>Zn(2+)</name>
        <dbReference type="ChEBI" id="CHEBI:29105"/>
        <label>2</label>
    </ligand>
</feature>
<feature type="binding site" evidence="1">
    <location>
        <position position="919"/>
    </location>
    <ligand>
        <name>Zn(2+)</name>
        <dbReference type="ChEBI" id="CHEBI:29105"/>
        <label>2</label>
    </ligand>
</feature>
<feature type="binding site" evidence="1">
    <location>
        <position position="922"/>
    </location>
    <ligand>
        <name>Zn(2+)</name>
        <dbReference type="ChEBI" id="CHEBI:29105"/>
        <label>2</label>
    </ligand>
</feature>
<accession>A8Z5T2</accession>
<comment type="function">
    <text evidence="1">DNA-dependent RNA polymerase catalyzes the transcription of DNA into RNA using the four ribonucleoside triphosphates as substrates.</text>
</comment>
<comment type="catalytic activity">
    <reaction evidence="1">
        <text>RNA(n) + a ribonucleoside 5'-triphosphate = RNA(n+1) + diphosphate</text>
        <dbReference type="Rhea" id="RHEA:21248"/>
        <dbReference type="Rhea" id="RHEA-COMP:14527"/>
        <dbReference type="Rhea" id="RHEA-COMP:17342"/>
        <dbReference type="ChEBI" id="CHEBI:33019"/>
        <dbReference type="ChEBI" id="CHEBI:61557"/>
        <dbReference type="ChEBI" id="CHEBI:140395"/>
        <dbReference type="EC" id="2.7.7.6"/>
    </reaction>
</comment>
<comment type="cofactor">
    <cofactor evidence="1">
        <name>Mg(2+)</name>
        <dbReference type="ChEBI" id="CHEBI:18420"/>
    </cofactor>
    <text evidence="1">Binds 1 Mg(2+) ion per subunit.</text>
</comment>
<comment type="cofactor">
    <cofactor evidence="1">
        <name>Zn(2+)</name>
        <dbReference type="ChEBI" id="CHEBI:29105"/>
    </cofactor>
    <text evidence="1">Binds 2 Zn(2+) ions per subunit.</text>
</comment>
<comment type="subunit">
    <text evidence="1">The RNAP catalytic core consists of 2 alpha, 1 beta, 1 beta' and 1 omega subunit. When a sigma factor is associated with the core the holoenzyme is formed, which can initiate transcription.</text>
</comment>
<comment type="similarity">
    <text evidence="1">Belongs to the RNA polymerase beta' chain family.</text>
</comment>
<comment type="sequence caution" evidence="3">
    <conflict type="erroneous initiation">
        <sequence resource="EMBL-CDS" id="ABS30483"/>
    </conflict>
    <text>Extended N-terminus.</text>
</comment>
<dbReference type="EC" id="2.7.7.6" evidence="1"/>
<dbReference type="EMBL" id="CP000770">
    <property type="protein sequence ID" value="ABS30483.1"/>
    <property type="status" value="ALT_INIT"/>
    <property type="molecule type" value="Genomic_DNA"/>
</dbReference>
<dbReference type="SMR" id="A8Z5T2"/>
<dbReference type="STRING" id="444179.SMGWSS_056"/>
<dbReference type="KEGG" id="smg:SMGWSS_056"/>
<dbReference type="HOGENOM" id="CLU_000524_3_1_10"/>
<dbReference type="Proteomes" id="UP000000781">
    <property type="component" value="Chromosome"/>
</dbReference>
<dbReference type="GO" id="GO:0000428">
    <property type="term" value="C:DNA-directed RNA polymerase complex"/>
    <property type="evidence" value="ECO:0007669"/>
    <property type="project" value="UniProtKB-KW"/>
</dbReference>
<dbReference type="GO" id="GO:0003677">
    <property type="term" value="F:DNA binding"/>
    <property type="evidence" value="ECO:0007669"/>
    <property type="project" value="UniProtKB-UniRule"/>
</dbReference>
<dbReference type="GO" id="GO:0003899">
    <property type="term" value="F:DNA-directed RNA polymerase activity"/>
    <property type="evidence" value="ECO:0007669"/>
    <property type="project" value="UniProtKB-UniRule"/>
</dbReference>
<dbReference type="GO" id="GO:0000287">
    <property type="term" value="F:magnesium ion binding"/>
    <property type="evidence" value="ECO:0007669"/>
    <property type="project" value="UniProtKB-UniRule"/>
</dbReference>
<dbReference type="GO" id="GO:0008270">
    <property type="term" value="F:zinc ion binding"/>
    <property type="evidence" value="ECO:0007669"/>
    <property type="project" value="UniProtKB-UniRule"/>
</dbReference>
<dbReference type="GO" id="GO:0006351">
    <property type="term" value="P:DNA-templated transcription"/>
    <property type="evidence" value="ECO:0007669"/>
    <property type="project" value="UniProtKB-UniRule"/>
</dbReference>
<dbReference type="CDD" id="cd02655">
    <property type="entry name" value="RNAP_beta'_C"/>
    <property type="match status" value="1"/>
</dbReference>
<dbReference type="CDD" id="cd01609">
    <property type="entry name" value="RNAP_beta'_N"/>
    <property type="match status" value="1"/>
</dbReference>
<dbReference type="Gene3D" id="1.10.132.30">
    <property type="match status" value="1"/>
</dbReference>
<dbReference type="Gene3D" id="1.10.150.390">
    <property type="match status" value="1"/>
</dbReference>
<dbReference type="Gene3D" id="1.10.1790.20">
    <property type="match status" value="1"/>
</dbReference>
<dbReference type="Gene3D" id="1.10.40.90">
    <property type="match status" value="1"/>
</dbReference>
<dbReference type="Gene3D" id="2.40.40.20">
    <property type="match status" value="1"/>
</dbReference>
<dbReference type="Gene3D" id="2.40.50.100">
    <property type="match status" value="2"/>
</dbReference>
<dbReference type="Gene3D" id="4.10.860.120">
    <property type="entry name" value="RNA polymerase II, clamp domain"/>
    <property type="match status" value="1"/>
</dbReference>
<dbReference type="Gene3D" id="1.10.274.100">
    <property type="entry name" value="RNA polymerase Rpb1, domain 3"/>
    <property type="match status" value="2"/>
</dbReference>
<dbReference type="HAMAP" id="MF_01322">
    <property type="entry name" value="RNApol_bact_RpoC"/>
    <property type="match status" value="1"/>
</dbReference>
<dbReference type="InterPro" id="IPR045867">
    <property type="entry name" value="DNA-dir_RpoC_beta_prime"/>
</dbReference>
<dbReference type="InterPro" id="IPR012754">
    <property type="entry name" value="DNA-dir_RpoC_beta_prime_bact"/>
</dbReference>
<dbReference type="InterPro" id="IPR000722">
    <property type="entry name" value="RNA_pol_asu"/>
</dbReference>
<dbReference type="InterPro" id="IPR006592">
    <property type="entry name" value="RNA_pol_N"/>
</dbReference>
<dbReference type="InterPro" id="IPR007080">
    <property type="entry name" value="RNA_pol_Rpb1_1"/>
</dbReference>
<dbReference type="InterPro" id="IPR007066">
    <property type="entry name" value="RNA_pol_Rpb1_3"/>
</dbReference>
<dbReference type="InterPro" id="IPR042102">
    <property type="entry name" value="RNA_pol_Rpb1_3_sf"/>
</dbReference>
<dbReference type="InterPro" id="IPR007083">
    <property type="entry name" value="RNA_pol_Rpb1_4"/>
</dbReference>
<dbReference type="InterPro" id="IPR007081">
    <property type="entry name" value="RNA_pol_Rpb1_5"/>
</dbReference>
<dbReference type="InterPro" id="IPR044893">
    <property type="entry name" value="RNA_pol_Rpb1_clamp_domain"/>
</dbReference>
<dbReference type="InterPro" id="IPR038120">
    <property type="entry name" value="Rpb1_funnel_sf"/>
</dbReference>
<dbReference type="NCBIfam" id="TIGR02386">
    <property type="entry name" value="rpoC_TIGR"/>
    <property type="match status" value="1"/>
</dbReference>
<dbReference type="PANTHER" id="PTHR19376">
    <property type="entry name" value="DNA-DIRECTED RNA POLYMERASE"/>
    <property type="match status" value="1"/>
</dbReference>
<dbReference type="PANTHER" id="PTHR19376:SF54">
    <property type="entry name" value="DNA-DIRECTED RNA POLYMERASE SUBUNIT BETA"/>
    <property type="match status" value="1"/>
</dbReference>
<dbReference type="Pfam" id="PF04997">
    <property type="entry name" value="RNA_pol_Rpb1_1"/>
    <property type="match status" value="1"/>
</dbReference>
<dbReference type="Pfam" id="PF00623">
    <property type="entry name" value="RNA_pol_Rpb1_2"/>
    <property type="match status" value="1"/>
</dbReference>
<dbReference type="Pfam" id="PF04983">
    <property type="entry name" value="RNA_pol_Rpb1_3"/>
    <property type="match status" value="1"/>
</dbReference>
<dbReference type="Pfam" id="PF05000">
    <property type="entry name" value="RNA_pol_Rpb1_4"/>
    <property type="match status" value="1"/>
</dbReference>
<dbReference type="Pfam" id="PF04998">
    <property type="entry name" value="RNA_pol_Rpb1_5"/>
    <property type="match status" value="2"/>
</dbReference>
<dbReference type="SMART" id="SM00663">
    <property type="entry name" value="RPOLA_N"/>
    <property type="match status" value="1"/>
</dbReference>
<dbReference type="SUPFAM" id="SSF64484">
    <property type="entry name" value="beta and beta-prime subunits of DNA dependent RNA-polymerase"/>
    <property type="match status" value="1"/>
</dbReference>